<proteinExistence type="inferred from homology"/>
<accession>A6MMF7</accession>
<sequence>MKEQKLIHEGLITESLPNGMFRVRLDNEDLILGYVSGRIRRSFIRILPGDRVKIEVSRYDSTRGRIIYRLRNKDSND</sequence>
<comment type="function">
    <text evidence="1">One of the essential components for the initiation of protein synthesis. Stabilizes the binding of IF-2 and IF-3 on the 30S subunit to which N-formylmethionyl-tRNA(fMet) subsequently binds. Helps modulate mRNA selection, yielding the 30S pre-initiation complex (PIC). Upon addition of the 50S ribosomal subunit IF-1, IF-2 and IF-3 are released leaving the mature 70S translation initiation complex.</text>
</comment>
<comment type="subunit">
    <text evidence="1">Component of the 30S ribosomal translation pre-initiation complex which assembles on the 30S ribosome in the order IF-2 and IF-3, IF-1 and N-formylmethionyl-tRNA(fMet); mRNA recruitment can occur at any time during PIC assembly.</text>
</comment>
<comment type="subcellular location">
    <subcellularLocation>
        <location evidence="1">Plastid</location>
        <location evidence="1">Chloroplast</location>
    </subcellularLocation>
</comment>
<comment type="similarity">
    <text evidence="1">Belongs to the IF-1 family.</text>
</comment>
<organism>
    <name type="scientific">Chloranthus spicatus</name>
    <name type="common">Chulantree</name>
    <name type="synonym">Nigrina spicata</name>
    <dbReference type="NCBI Taxonomy" id="13006"/>
    <lineage>
        <taxon>Eukaryota</taxon>
        <taxon>Viridiplantae</taxon>
        <taxon>Streptophyta</taxon>
        <taxon>Embryophyta</taxon>
        <taxon>Tracheophyta</taxon>
        <taxon>Spermatophyta</taxon>
        <taxon>Magnoliopsida</taxon>
        <taxon>Chloranthales</taxon>
        <taxon>Chloranthaceae</taxon>
        <taxon>Chloranthus</taxon>
    </lineage>
</organism>
<feature type="chain" id="PRO_0000338959" description="Translation initiation factor IF-1, chloroplastic">
    <location>
        <begin position="1"/>
        <end position="77"/>
    </location>
</feature>
<feature type="domain" description="S1-like" evidence="1">
    <location>
        <begin position="1"/>
        <end position="71"/>
    </location>
</feature>
<name>IF1C_CHLSC</name>
<gene>
    <name evidence="1" type="primary">infA</name>
</gene>
<evidence type="ECO:0000255" key="1">
    <source>
        <dbReference type="HAMAP-Rule" id="MF_00075"/>
    </source>
</evidence>
<keyword id="KW-0150">Chloroplast</keyword>
<keyword id="KW-0396">Initiation factor</keyword>
<keyword id="KW-0934">Plastid</keyword>
<keyword id="KW-0648">Protein biosynthesis</keyword>
<keyword id="KW-0694">RNA-binding</keyword>
<keyword id="KW-0699">rRNA-binding</keyword>
<geneLocation type="chloroplast"/>
<dbReference type="EMBL" id="EF380352">
    <property type="protein sequence ID" value="ABQ43294.1"/>
    <property type="molecule type" value="Genomic_DNA"/>
</dbReference>
<dbReference type="RefSeq" id="YP_001294133.1">
    <property type="nucleotide sequence ID" value="NC_009598.1"/>
</dbReference>
<dbReference type="SMR" id="A6MMF7"/>
<dbReference type="GeneID" id="5236422"/>
<dbReference type="GO" id="GO:0009507">
    <property type="term" value="C:chloroplast"/>
    <property type="evidence" value="ECO:0007669"/>
    <property type="project" value="UniProtKB-SubCell"/>
</dbReference>
<dbReference type="GO" id="GO:0005829">
    <property type="term" value="C:cytosol"/>
    <property type="evidence" value="ECO:0007669"/>
    <property type="project" value="TreeGrafter"/>
</dbReference>
<dbReference type="GO" id="GO:0043022">
    <property type="term" value="F:ribosome binding"/>
    <property type="evidence" value="ECO:0007669"/>
    <property type="project" value="UniProtKB-UniRule"/>
</dbReference>
<dbReference type="GO" id="GO:0019843">
    <property type="term" value="F:rRNA binding"/>
    <property type="evidence" value="ECO:0007669"/>
    <property type="project" value="UniProtKB-UniRule"/>
</dbReference>
<dbReference type="GO" id="GO:0003743">
    <property type="term" value="F:translation initiation factor activity"/>
    <property type="evidence" value="ECO:0007669"/>
    <property type="project" value="UniProtKB-UniRule"/>
</dbReference>
<dbReference type="CDD" id="cd04451">
    <property type="entry name" value="S1_IF1"/>
    <property type="match status" value="1"/>
</dbReference>
<dbReference type="FunFam" id="2.40.50.140:FF:000019">
    <property type="entry name" value="Translation initiation factor IF-1, chloroplastic"/>
    <property type="match status" value="1"/>
</dbReference>
<dbReference type="Gene3D" id="2.40.50.140">
    <property type="entry name" value="Nucleic acid-binding proteins"/>
    <property type="match status" value="1"/>
</dbReference>
<dbReference type="HAMAP" id="MF_00075">
    <property type="entry name" value="IF_1"/>
    <property type="match status" value="1"/>
</dbReference>
<dbReference type="InterPro" id="IPR012340">
    <property type="entry name" value="NA-bd_OB-fold"/>
</dbReference>
<dbReference type="InterPro" id="IPR006196">
    <property type="entry name" value="RNA-binding_domain_S1_IF1"/>
</dbReference>
<dbReference type="InterPro" id="IPR003029">
    <property type="entry name" value="S1_domain"/>
</dbReference>
<dbReference type="InterPro" id="IPR004368">
    <property type="entry name" value="TIF_IF1"/>
</dbReference>
<dbReference type="NCBIfam" id="TIGR00008">
    <property type="entry name" value="infA"/>
    <property type="match status" value="1"/>
</dbReference>
<dbReference type="PANTHER" id="PTHR33370">
    <property type="entry name" value="TRANSLATION INITIATION FACTOR IF-1, CHLOROPLASTIC"/>
    <property type="match status" value="1"/>
</dbReference>
<dbReference type="PANTHER" id="PTHR33370:SF1">
    <property type="entry name" value="TRANSLATION INITIATION FACTOR IF-1, CHLOROPLASTIC"/>
    <property type="match status" value="1"/>
</dbReference>
<dbReference type="Pfam" id="PF01176">
    <property type="entry name" value="eIF-1a"/>
    <property type="match status" value="1"/>
</dbReference>
<dbReference type="SMART" id="SM00316">
    <property type="entry name" value="S1"/>
    <property type="match status" value="1"/>
</dbReference>
<dbReference type="SUPFAM" id="SSF50249">
    <property type="entry name" value="Nucleic acid-binding proteins"/>
    <property type="match status" value="1"/>
</dbReference>
<dbReference type="PROSITE" id="PS50832">
    <property type="entry name" value="S1_IF1_TYPE"/>
    <property type="match status" value="1"/>
</dbReference>
<reference key="1">
    <citation type="journal article" date="2007" name="Mol. Phylogenet. Evol.">
        <title>Phylogenetic and evolutionary implications of complete chloroplast genome sequences of four early-diverging angiosperms: Buxus (Buxaceae), Chloranthus (Chloranthaceae), Dioscorea (Dioscoreaceae), and Illicium (Schisandraceae).</title>
        <authorList>
            <person name="Hansen D.R."/>
            <person name="Dastidar S.G."/>
            <person name="Cai Z."/>
            <person name="Penaflor C."/>
            <person name="Kuehl J.V."/>
            <person name="Boore J.L."/>
            <person name="Jansen R.K."/>
        </authorList>
    </citation>
    <scope>NUCLEOTIDE SEQUENCE [LARGE SCALE GENOMIC DNA]</scope>
</reference>
<protein>
    <recommendedName>
        <fullName evidence="1">Translation initiation factor IF-1, chloroplastic</fullName>
    </recommendedName>
</protein>